<protein>
    <recommendedName>
        <fullName evidence="1">Elongation factor P</fullName>
        <shortName evidence="1">EF-P</shortName>
    </recommendedName>
</protein>
<gene>
    <name evidence="1" type="primary">efp</name>
    <name type="ordered locus">AAur_2273</name>
</gene>
<sequence>MATTNDIKNGTVLKLEGQLWNIIEFQHVKPGKGGAFVRTKMRNVMSGKVVDKTFNAGLKIETATVDRRDYQYLYQDGEDFVFMDTQDYDQITVSGATVGDATNFMLENQMVNIAIHEGTPLYIELPPSVVLEITYTEPGLQGDRSSAGTKPATVETGYEIQVPLFVEQGTKVKVDTRDGSYLGRVND</sequence>
<dbReference type="EMBL" id="CP000474">
    <property type="protein sequence ID" value="ABM07469.1"/>
    <property type="molecule type" value="Genomic_DNA"/>
</dbReference>
<dbReference type="RefSeq" id="WP_011774957.1">
    <property type="nucleotide sequence ID" value="NC_008711.1"/>
</dbReference>
<dbReference type="SMR" id="A1R701"/>
<dbReference type="STRING" id="290340.AAur_2273"/>
<dbReference type="GeneID" id="97301134"/>
<dbReference type="KEGG" id="aau:AAur_2273"/>
<dbReference type="eggNOG" id="COG0231">
    <property type="taxonomic scope" value="Bacteria"/>
</dbReference>
<dbReference type="HOGENOM" id="CLU_074944_0_1_11"/>
<dbReference type="OrthoDB" id="9801844at2"/>
<dbReference type="UniPathway" id="UPA00345"/>
<dbReference type="Proteomes" id="UP000000637">
    <property type="component" value="Chromosome"/>
</dbReference>
<dbReference type="GO" id="GO:0005737">
    <property type="term" value="C:cytoplasm"/>
    <property type="evidence" value="ECO:0007669"/>
    <property type="project" value="UniProtKB-SubCell"/>
</dbReference>
<dbReference type="GO" id="GO:0003746">
    <property type="term" value="F:translation elongation factor activity"/>
    <property type="evidence" value="ECO:0007669"/>
    <property type="project" value="UniProtKB-UniRule"/>
</dbReference>
<dbReference type="GO" id="GO:0043043">
    <property type="term" value="P:peptide biosynthetic process"/>
    <property type="evidence" value="ECO:0007669"/>
    <property type="project" value="InterPro"/>
</dbReference>
<dbReference type="CDD" id="cd04470">
    <property type="entry name" value="S1_EF-P_repeat_1"/>
    <property type="match status" value="1"/>
</dbReference>
<dbReference type="CDD" id="cd05794">
    <property type="entry name" value="S1_EF-P_repeat_2"/>
    <property type="match status" value="1"/>
</dbReference>
<dbReference type="FunFam" id="2.30.30.30:FF:000003">
    <property type="entry name" value="Elongation factor P"/>
    <property type="match status" value="1"/>
</dbReference>
<dbReference type="FunFam" id="2.40.50.140:FF:000004">
    <property type="entry name" value="Elongation factor P"/>
    <property type="match status" value="1"/>
</dbReference>
<dbReference type="FunFam" id="2.40.50.140:FF:000009">
    <property type="entry name" value="Elongation factor P"/>
    <property type="match status" value="1"/>
</dbReference>
<dbReference type="Gene3D" id="2.30.30.30">
    <property type="match status" value="1"/>
</dbReference>
<dbReference type="Gene3D" id="2.40.50.140">
    <property type="entry name" value="Nucleic acid-binding proteins"/>
    <property type="match status" value="2"/>
</dbReference>
<dbReference type="HAMAP" id="MF_00141">
    <property type="entry name" value="EF_P"/>
    <property type="match status" value="1"/>
</dbReference>
<dbReference type="InterPro" id="IPR015365">
    <property type="entry name" value="Elong-fact-P_C"/>
</dbReference>
<dbReference type="InterPro" id="IPR012340">
    <property type="entry name" value="NA-bd_OB-fold"/>
</dbReference>
<dbReference type="InterPro" id="IPR014722">
    <property type="entry name" value="Rib_uL2_dom2"/>
</dbReference>
<dbReference type="InterPro" id="IPR020599">
    <property type="entry name" value="Transl_elong_fac_P/YeiP"/>
</dbReference>
<dbReference type="InterPro" id="IPR013185">
    <property type="entry name" value="Transl_elong_KOW-like"/>
</dbReference>
<dbReference type="InterPro" id="IPR001059">
    <property type="entry name" value="Transl_elong_P/YeiP_cen"/>
</dbReference>
<dbReference type="InterPro" id="IPR013852">
    <property type="entry name" value="Transl_elong_P/YeiP_CS"/>
</dbReference>
<dbReference type="InterPro" id="IPR011768">
    <property type="entry name" value="Transl_elongation_fac_P"/>
</dbReference>
<dbReference type="InterPro" id="IPR008991">
    <property type="entry name" value="Translation_prot_SH3-like_sf"/>
</dbReference>
<dbReference type="NCBIfam" id="TIGR00038">
    <property type="entry name" value="efp"/>
    <property type="match status" value="1"/>
</dbReference>
<dbReference type="NCBIfam" id="NF001810">
    <property type="entry name" value="PRK00529.1"/>
    <property type="match status" value="1"/>
</dbReference>
<dbReference type="PANTHER" id="PTHR30053">
    <property type="entry name" value="ELONGATION FACTOR P"/>
    <property type="match status" value="1"/>
</dbReference>
<dbReference type="PANTHER" id="PTHR30053:SF12">
    <property type="entry name" value="ELONGATION FACTOR P (EF-P) FAMILY PROTEIN"/>
    <property type="match status" value="1"/>
</dbReference>
<dbReference type="Pfam" id="PF01132">
    <property type="entry name" value="EFP"/>
    <property type="match status" value="1"/>
</dbReference>
<dbReference type="Pfam" id="PF08207">
    <property type="entry name" value="EFP_N"/>
    <property type="match status" value="1"/>
</dbReference>
<dbReference type="Pfam" id="PF09285">
    <property type="entry name" value="Elong-fact-P_C"/>
    <property type="match status" value="1"/>
</dbReference>
<dbReference type="PIRSF" id="PIRSF005901">
    <property type="entry name" value="EF-P"/>
    <property type="match status" value="1"/>
</dbReference>
<dbReference type="SMART" id="SM01185">
    <property type="entry name" value="EFP"/>
    <property type="match status" value="1"/>
</dbReference>
<dbReference type="SMART" id="SM00841">
    <property type="entry name" value="Elong-fact-P_C"/>
    <property type="match status" value="1"/>
</dbReference>
<dbReference type="SUPFAM" id="SSF50249">
    <property type="entry name" value="Nucleic acid-binding proteins"/>
    <property type="match status" value="2"/>
</dbReference>
<dbReference type="SUPFAM" id="SSF50104">
    <property type="entry name" value="Translation proteins SH3-like domain"/>
    <property type="match status" value="1"/>
</dbReference>
<dbReference type="PROSITE" id="PS01275">
    <property type="entry name" value="EFP"/>
    <property type="match status" value="1"/>
</dbReference>
<comment type="function">
    <text evidence="1">Involved in peptide bond synthesis. Stimulates efficient translation and peptide-bond synthesis on native or reconstituted 70S ribosomes in vitro. Probably functions indirectly by altering the affinity of the ribosome for aminoacyl-tRNA, thus increasing their reactivity as acceptors for peptidyl transferase.</text>
</comment>
<comment type="pathway">
    <text evidence="1">Protein biosynthesis; polypeptide chain elongation.</text>
</comment>
<comment type="subcellular location">
    <subcellularLocation>
        <location evidence="1">Cytoplasm</location>
    </subcellularLocation>
</comment>
<comment type="similarity">
    <text evidence="1">Belongs to the elongation factor P family.</text>
</comment>
<feature type="chain" id="PRO_1000010677" description="Elongation factor P">
    <location>
        <begin position="1"/>
        <end position="187"/>
    </location>
</feature>
<accession>A1R701</accession>
<organism>
    <name type="scientific">Paenarthrobacter aurescens (strain TC1)</name>
    <dbReference type="NCBI Taxonomy" id="290340"/>
    <lineage>
        <taxon>Bacteria</taxon>
        <taxon>Bacillati</taxon>
        <taxon>Actinomycetota</taxon>
        <taxon>Actinomycetes</taxon>
        <taxon>Micrococcales</taxon>
        <taxon>Micrococcaceae</taxon>
        <taxon>Paenarthrobacter</taxon>
    </lineage>
</organism>
<proteinExistence type="inferred from homology"/>
<evidence type="ECO:0000255" key="1">
    <source>
        <dbReference type="HAMAP-Rule" id="MF_00141"/>
    </source>
</evidence>
<reference key="1">
    <citation type="journal article" date="2006" name="PLoS Genet.">
        <title>Secrets of soil survival revealed by the genome sequence of Arthrobacter aurescens TC1.</title>
        <authorList>
            <person name="Mongodin E.F."/>
            <person name="Shapir N."/>
            <person name="Daugherty S.C."/>
            <person name="DeBoy R.T."/>
            <person name="Emerson J.B."/>
            <person name="Shvartzbeyn A."/>
            <person name="Radune D."/>
            <person name="Vamathevan J."/>
            <person name="Riggs F."/>
            <person name="Grinberg V."/>
            <person name="Khouri H.M."/>
            <person name="Wackett L.P."/>
            <person name="Nelson K.E."/>
            <person name="Sadowsky M.J."/>
        </authorList>
    </citation>
    <scope>NUCLEOTIDE SEQUENCE [LARGE SCALE GENOMIC DNA]</scope>
    <source>
        <strain>TC1</strain>
    </source>
</reference>
<keyword id="KW-0963">Cytoplasm</keyword>
<keyword id="KW-0251">Elongation factor</keyword>
<keyword id="KW-0648">Protein biosynthesis</keyword>
<name>EFP_PAEAT</name>